<feature type="chain" id="PRO_0000104227" description="Protein translocase subunit SecE">
    <location>
        <begin position="1"/>
        <end position="61"/>
    </location>
</feature>
<feature type="transmembrane region" description="Helical" evidence="1">
    <location>
        <begin position="38"/>
        <end position="58"/>
    </location>
</feature>
<name>SECE_THEKO</name>
<accession>Q5JH32</accession>
<reference key="1">
    <citation type="journal article" date="2005" name="Genome Res.">
        <title>Complete genome sequence of the hyperthermophilic archaeon Thermococcus kodakaraensis KOD1 and comparison with Pyrococcus genomes.</title>
        <authorList>
            <person name="Fukui T."/>
            <person name="Atomi H."/>
            <person name="Kanai T."/>
            <person name="Matsumi R."/>
            <person name="Fujiwara S."/>
            <person name="Imanaka T."/>
        </authorList>
    </citation>
    <scope>NUCLEOTIDE SEQUENCE [LARGE SCALE GENOMIC DNA]</scope>
    <source>
        <strain>ATCC BAA-918 / JCM 12380 / KOD1</strain>
    </source>
</reference>
<proteinExistence type="inferred from homology"/>
<dbReference type="EMBL" id="AP006878">
    <property type="protein sequence ID" value="BAD85609.1"/>
    <property type="molecule type" value="Genomic_DNA"/>
</dbReference>
<dbReference type="RefSeq" id="WP_011250371.1">
    <property type="nucleotide sequence ID" value="NC_006624.1"/>
</dbReference>
<dbReference type="SMR" id="Q5JH32"/>
<dbReference type="FunCoup" id="Q5JH32">
    <property type="interactions" value="28"/>
</dbReference>
<dbReference type="STRING" id="69014.TK1420"/>
<dbReference type="EnsemblBacteria" id="BAD85609">
    <property type="protein sequence ID" value="BAD85609"/>
    <property type="gene ID" value="TK1420"/>
</dbReference>
<dbReference type="GeneID" id="78447941"/>
<dbReference type="KEGG" id="tko:TK1420"/>
<dbReference type="PATRIC" id="fig|69014.16.peg.1382"/>
<dbReference type="eggNOG" id="arCOG02204">
    <property type="taxonomic scope" value="Archaea"/>
</dbReference>
<dbReference type="HOGENOM" id="CLU_191921_0_1_2"/>
<dbReference type="InParanoid" id="Q5JH32"/>
<dbReference type="OrthoDB" id="86216at2157"/>
<dbReference type="Proteomes" id="UP000000536">
    <property type="component" value="Chromosome"/>
</dbReference>
<dbReference type="GO" id="GO:0005886">
    <property type="term" value="C:plasma membrane"/>
    <property type="evidence" value="ECO:0007669"/>
    <property type="project" value="UniProtKB-SubCell"/>
</dbReference>
<dbReference type="GO" id="GO:0008320">
    <property type="term" value="F:protein transmembrane transporter activity"/>
    <property type="evidence" value="ECO:0007669"/>
    <property type="project" value="UniProtKB-UniRule"/>
</dbReference>
<dbReference type="GO" id="GO:0065002">
    <property type="term" value="P:intracellular protein transmembrane transport"/>
    <property type="evidence" value="ECO:0007669"/>
    <property type="project" value="UniProtKB-UniRule"/>
</dbReference>
<dbReference type="GO" id="GO:0009306">
    <property type="term" value="P:protein secretion"/>
    <property type="evidence" value="ECO:0007669"/>
    <property type="project" value="UniProtKB-UniRule"/>
</dbReference>
<dbReference type="GO" id="GO:0006605">
    <property type="term" value="P:protein targeting"/>
    <property type="evidence" value="ECO:0007669"/>
    <property type="project" value="UniProtKB-UniRule"/>
</dbReference>
<dbReference type="Gene3D" id="1.20.5.820">
    <property type="entry name" value="Preprotein translocase SecE subunit"/>
    <property type="match status" value="1"/>
</dbReference>
<dbReference type="HAMAP" id="MF_00422">
    <property type="entry name" value="SecE"/>
    <property type="match status" value="1"/>
</dbReference>
<dbReference type="InterPro" id="IPR023391">
    <property type="entry name" value="Prot_translocase_SecE_dom_sf"/>
</dbReference>
<dbReference type="InterPro" id="IPR008158">
    <property type="entry name" value="Translocase_Sec61-g"/>
</dbReference>
<dbReference type="InterPro" id="IPR001901">
    <property type="entry name" value="Translocase_SecE/Sec61-g"/>
</dbReference>
<dbReference type="NCBIfam" id="NF006909">
    <property type="entry name" value="PRK09400.1-4"/>
    <property type="match status" value="1"/>
</dbReference>
<dbReference type="NCBIfam" id="TIGR00327">
    <property type="entry name" value="secE_euk_arch"/>
    <property type="match status" value="1"/>
</dbReference>
<dbReference type="SUPFAM" id="SSF103456">
    <property type="entry name" value="Preprotein translocase SecE subunit"/>
    <property type="match status" value="1"/>
</dbReference>
<dbReference type="PROSITE" id="PS01067">
    <property type="entry name" value="SECE_SEC61G"/>
    <property type="match status" value="1"/>
</dbReference>
<sequence length="61" mass="6643">MAEFTEKVKSFLAESKRVLLVTKKPGMKEFKLAAKITGIGMILIGTIGMIIRIIGYLVTGS</sequence>
<comment type="function">
    <text evidence="1">Essential subunit of the Sec protein translocation channel SecYEG. Clamps together the 2 halves of SecY. May contact the channel plug during translocation.</text>
</comment>
<comment type="subunit">
    <text evidence="1">Component of the Sec protein translocase complex. Heterotrimer consisting of SecY (alpha), SecG (beta) and SecE (gamma) subunits. The heterotrimers can form oligomers, although 1 heterotrimer is thought to be able to translocate proteins. Interacts with the ribosome. May interact with SecDF, and other proteins may be involved.</text>
</comment>
<comment type="subcellular location">
    <subcellularLocation>
        <location evidence="1">Cell membrane</location>
        <topology evidence="1">Single-pass membrane protein</topology>
    </subcellularLocation>
</comment>
<comment type="similarity">
    <text evidence="1">Belongs to the SecE/SEC61-gamma family.</text>
</comment>
<organism>
    <name type="scientific">Thermococcus kodakarensis (strain ATCC BAA-918 / JCM 12380 / KOD1)</name>
    <name type="common">Pyrococcus kodakaraensis (strain KOD1)</name>
    <dbReference type="NCBI Taxonomy" id="69014"/>
    <lineage>
        <taxon>Archaea</taxon>
        <taxon>Methanobacteriati</taxon>
        <taxon>Methanobacteriota</taxon>
        <taxon>Thermococci</taxon>
        <taxon>Thermococcales</taxon>
        <taxon>Thermococcaceae</taxon>
        <taxon>Thermococcus</taxon>
    </lineage>
</organism>
<protein>
    <recommendedName>
        <fullName evidence="1">Protein translocase subunit SecE</fullName>
    </recommendedName>
    <alternativeName>
        <fullName evidence="1">Protein transport protein Sec61 gamma subunit homolog</fullName>
    </alternativeName>
</protein>
<keyword id="KW-1003">Cell membrane</keyword>
<keyword id="KW-0472">Membrane</keyword>
<keyword id="KW-0653">Protein transport</keyword>
<keyword id="KW-1185">Reference proteome</keyword>
<keyword id="KW-0811">Translocation</keyword>
<keyword id="KW-0812">Transmembrane</keyword>
<keyword id="KW-1133">Transmembrane helix</keyword>
<keyword id="KW-0813">Transport</keyword>
<gene>
    <name evidence="1" type="primary">secE</name>
    <name type="ordered locus">TK1420</name>
</gene>
<evidence type="ECO:0000255" key="1">
    <source>
        <dbReference type="HAMAP-Rule" id="MF_00422"/>
    </source>
</evidence>